<feature type="chain" id="PRO_0000066042" description="Xanthine phosphoribosyltransferase 1">
    <location>
        <begin position="1"/>
        <end position="209"/>
    </location>
</feature>
<feature type="modified residue" description="Phosphoserine" evidence="4">
    <location>
        <position position="79"/>
    </location>
</feature>
<evidence type="ECO:0000269" key="1">
    <source>
    </source>
</evidence>
<evidence type="ECO:0000269" key="2">
    <source>
    </source>
</evidence>
<evidence type="ECO:0000269" key="3">
    <source>
    </source>
</evidence>
<evidence type="ECO:0007744" key="4">
    <source>
    </source>
</evidence>
<keyword id="KW-0963">Cytoplasm</keyword>
<keyword id="KW-0328">Glycosyltransferase</keyword>
<keyword id="KW-0597">Phosphoprotein</keyword>
<keyword id="KW-0658">Purine biosynthesis</keyword>
<keyword id="KW-1185">Reference proteome</keyword>
<keyword id="KW-0808">Transferase</keyword>
<sequence length="209" mass="23671">MAENERMYISYNNIHKLCQGVAKHILARNERPDIIIAITGGGMIPARIIRSFLKTKGQKNIPIQAIGLSLYEDLGLDNSVETIGKEVIRTQWLDFGALNQHFDSLIGKKVLIVDEVDDTRTTLHYAVSELEKEIAEQQKVLNRMSEETVISIFVLHNKDKPKRAGLPDSMMNSGRYIAAQTVPDKWLCYPWDAEDIEEHTMLAKAQGHD</sequence>
<reference key="1">
    <citation type="journal article" date="1996" name="EMBO J.">
        <title>Complete nucleotide sequence of Saccharomyces cerevisiae chromosome X.</title>
        <authorList>
            <person name="Galibert F."/>
            <person name="Alexandraki D."/>
            <person name="Baur A."/>
            <person name="Boles E."/>
            <person name="Chalwatzis N."/>
            <person name="Chuat J.-C."/>
            <person name="Coster F."/>
            <person name="Cziepluch C."/>
            <person name="de Haan M."/>
            <person name="Domdey H."/>
            <person name="Durand P."/>
            <person name="Entian K.-D."/>
            <person name="Gatius M."/>
            <person name="Goffeau A."/>
            <person name="Grivell L.A."/>
            <person name="Hennemann A."/>
            <person name="Herbert C.J."/>
            <person name="Heumann K."/>
            <person name="Hilger F."/>
            <person name="Hollenberg C.P."/>
            <person name="Huang M.-E."/>
            <person name="Jacq C."/>
            <person name="Jauniaux J.-C."/>
            <person name="Katsoulou C."/>
            <person name="Kirchrath L."/>
            <person name="Kleine K."/>
            <person name="Kordes E."/>
            <person name="Koetter P."/>
            <person name="Liebl S."/>
            <person name="Louis E.J."/>
            <person name="Manus V."/>
            <person name="Mewes H.-W."/>
            <person name="Miosga T."/>
            <person name="Obermaier B."/>
            <person name="Perea J."/>
            <person name="Pohl T.M."/>
            <person name="Portetelle D."/>
            <person name="Pujol A."/>
            <person name="Purnelle B."/>
            <person name="Ramezani Rad M."/>
            <person name="Rasmussen S.W."/>
            <person name="Rose M."/>
            <person name="Rossau R."/>
            <person name="Schaaff-Gerstenschlaeger I."/>
            <person name="Smits P.H.M."/>
            <person name="Scarcez T."/>
            <person name="Soriano N."/>
            <person name="To Van D."/>
            <person name="Tzermia M."/>
            <person name="Van Broekhoven A."/>
            <person name="Vandenbol M."/>
            <person name="Wedler H."/>
            <person name="von Wettstein D."/>
            <person name="Wambutt R."/>
            <person name="Zagulski M."/>
            <person name="Zollner A."/>
            <person name="Karpfinger-Hartl L."/>
        </authorList>
    </citation>
    <scope>NUCLEOTIDE SEQUENCE [LARGE SCALE GENOMIC DNA]</scope>
    <source>
        <strain>ATCC 204508 / S288c</strain>
    </source>
</reference>
<reference key="2">
    <citation type="journal article" date="2014" name="G3 (Bethesda)">
        <title>The reference genome sequence of Saccharomyces cerevisiae: Then and now.</title>
        <authorList>
            <person name="Engel S.R."/>
            <person name="Dietrich F.S."/>
            <person name="Fisk D.G."/>
            <person name="Binkley G."/>
            <person name="Balakrishnan R."/>
            <person name="Costanzo M.C."/>
            <person name="Dwight S.S."/>
            <person name="Hitz B.C."/>
            <person name="Karra K."/>
            <person name="Nash R.S."/>
            <person name="Weng S."/>
            <person name="Wong E.D."/>
            <person name="Lloyd P."/>
            <person name="Skrzypek M.S."/>
            <person name="Miyasato S.R."/>
            <person name="Simison M."/>
            <person name="Cherry J.M."/>
        </authorList>
    </citation>
    <scope>GENOME REANNOTATION</scope>
    <source>
        <strain>ATCC 204508 / S288c</strain>
    </source>
</reference>
<reference key="3">
    <citation type="journal article" date="1999" name="J. Bacteriol.">
        <title>Isolation and characterization of the Saccharomyces cerevisiae XPT1 gene encoding xanthine phosphoribosyl transferase.</title>
        <authorList>
            <person name="Guetsova M.L."/>
            <person name="Crother T.R."/>
            <person name="Taylor M.W."/>
            <person name="Daignan-Fornier B."/>
        </authorList>
    </citation>
    <scope>FUNCTION</scope>
</reference>
<reference key="4">
    <citation type="journal article" date="2003" name="Nature">
        <title>Global analysis of protein localization in budding yeast.</title>
        <authorList>
            <person name="Huh W.-K."/>
            <person name="Falvo J.V."/>
            <person name="Gerke L.C."/>
            <person name="Carroll A.S."/>
            <person name="Howson R.W."/>
            <person name="Weissman J.S."/>
            <person name="O'Shea E.K."/>
        </authorList>
    </citation>
    <scope>SUBCELLULAR LOCATION [LARGE SCALE ANALYSIS]</scope>
</reference>
<reference key="5">
    <citation type="journal article" date="2003" name="Nature">
        <title>Global analysis of protein expression in yeast.</title>
        <authorList>
            <person name="Ghaemmaghami S."/>
            <person name="Huh W.-K."/>
            <person name="Bower K."/>
            <person name="Howson R.W."/>
            <person name="Belle A."/>
            <person name="Dephoure N."/>
            <person name="O'Shea E.K."/>
            <person name="Weissman J.S."/>
        </authorList>
    </citation>
    <scope>LEVEL OF PROTEIN EXPRESSION [LARGE SCALE ANALYSIS]</scope>
</reference>
<reference key="6">
    <citation type="journal article" date="2008" name="Mol. Cell. Proteomics">
        <title>A multidimensional chromatography technology for in-depth phosphoproteome analysis.</title>
        <authorList>
            <person name="Albuquerque C.P."/>
            <person name="Smolka M.B."/>
            <person name="Payne S.H."/>
            <person name="Bafna V."/>
            <person name="Eng J."/>
            <person name="Zhou H."/>
        </authorList>
    </citation>
    <scope>PHOSPHORYLATION [LARGE SCALE ANALYSIS] AT SER-79</scope>
    <scope>IDENTIFICATION BY MASS SPECTROMETRY [LARGE SCALE ANALYSIS]</scope>
</reference>
<accession>P47165</accession>
<accession>D6VWV1</accession>
<protein>
    <recommendedName>
        <fullName>Xanthine phosphoribosyltransferase 1</fullName>
        <shortName>XPRT</shortName>
        <ecNumber>2.4.2.-</ecNumber>
    </recommendedName>
</protein>
<dbReference type="EC" id="2.4.2.-"/>
<dbReference type="EMBL" id="Z49633">
    <property type="protein sequence ID" value="CAA89664.1"/>
    <property type="molecule type" value="Genomic_DNA"/>
</dbReference>
<dbReference type="EMBL" id="BK006943">
    <property type="protein sequence ID" value="DAA08917.1"/>
    <property type="molecule type" value="Genomic_DNA"/>
</dbReference>
<dbReference type="PIR" id="S57156">
    <property type="entry name" value="S57156"/>
</dbReference>
<dbReference type="RefSeq" id="NP_012667.1">
    <property type="nucleotide sequence ID" value="NM_001181791.1"/>
</dbReference>
<dbReference type="SMR" id="P47165"/>
<dbReference type="BioGRID" id="33888">
    <property type="interactions" value="80"/>
</dbReference>
<dbReference type="DIP" id="DIP-1576N"/>
<dbReference type="FunCoup" id="P47165">
    <property type="interactions" value="61"/>
</dbReference>
<dbReference type="IntAct" id="P47165">
    <property type="interactions" value="6"/>
</dbReference>
<dbReference type="MINT" id="P47165"/>
<dbReference type="STRING" id="4932.YJR133W"/>
<dbReference type="iPTMnet" id="P47165"/>
<dbReference type="PaxDb" id="4932-YJR133W"/>
<dbReference type="PeptideAtlas" id="P47165"/>
<dbReference type="EnsemblFungi" id="YJR133W_mRNA">
    <property type="protein sequence ID" value="YJR133W"/>
    <property type="gene ID" value="YJR133W"/>
</dbReference>
<dbReference type="GeneID" id="853597"/>
<dbReference type="KEGG" id="sce:YJR133W"/>
<dbReference type="AGR" id="SGD:S000003894"/>
<dbReference type="SGD" id="S000003894">
    <property type="gene designation" value="XPT1"/>
</dbReference>
<dbReference type="VEuPathDB" id="FungiDB:YJR133W"/>
<dbReference type="eggNOG" id="ENOG502QRN9">
    <property type="taxonomic scope" value="Eukaryota"/>
</dbReference>
<dbReference type="GeneTree" id="ENSGT00940000176607"/>
<dbReference type="HOGENOM" id="CLU_092544_0_0_1"/>
<dbReference type="InParanoid" id="P47165"/>
<dbReference type="OMA" id="TYNDVHN"/>
<dbReference type="OrthoDB" id="9973266at2759"/>
<dbReference type="BioCyc" id="YEAST:YJR133W-MONOMER"/>
<dbReference type="BioGRID-ORCS" id="853597">
    <property type="hits" value="0 hits in 10 CRISPR screens"/>
</dbReference>
<dbReference type="CD-CODE" id="E03F929F">
    <property type="entry name" value="Stress granule"/>
</dbReference>
<dbReference type="PRO" id="PR:P47165"/>
<dbReference type="Proteomes" id="UP000002311">
    <property type="component" value="Chromosome X"/>
</dbReference>
<dbReference type="RNAct" id="P47165">
    <property type="molecule type" value="protein"/>
</dbReference>
<dbReference type="GO" id="GO:0005737">
    <property type="term" value="C:cytoplasm"/>
    <property type="evidence" value="ECO:0007005"/>
    <property type="project" value="SGD"/>
</dbReference>
<dbReference type="GO" id="GO:0004422">
    <property type="term" value="F:hypoxanthine phosphoribosyltransferase activity"/>
    <property type="evidence" value="ECO:0000316"/>
    <property type="project" value="SGD"/>
</dbReference>
<dbReference type="GO" id="GO:0000310">
    <property type="term" value="F:xanthine phosphoribosyltransferase activity"/>
    <property type="evidence" value="ECO:0000315"/>
    <property type="project" value="SGD"/>
</dbReference>
<dbReference type="GO" id="GO:0032263">
    <property type="term" value="P:GMP salvage"/>
    <property type="evidence" value="ECO:0000318"/>
    <property type="project" value="GO_Central"/>
</dbReference>
<dbReference type="GO" id="GO:0046100">
    <property type="term" value="P:hypoxanthine metabolic process"/>
    <property type="evidence" value="ECO:0000316"/>
    <property type="project" value="SGD"/>
</dbReference>
<dbReference type="GO" id="GO:0032264">
    <property type="term" value="P:IMP salvage"/>
    <property type="evidence" value="ECO:0000318"/>
    <property type="project" value="GO_Central"/>
</dbReference>
<dbReference type="GO" id="GO:0032265">
    <property type="term" value="P:XMP salvage"/>
    <property type="evidence" value="ECO:0000315"/>
    <property type="project" value="SGD"/>
</dbReference>
<dbReference type="CDD" id="cd06223">
    <property type="entry name" value="PRTases_typeI"/>
    <property type="match status" value="1"/>
</dbReference>
<dbReference type="FunFam" id="3.40.50.2020:FF:000033">
    <property type="entry name" value="Xanthine phosphoribosyltransferase 1"/>
    <property type="match status" value="1"/>
</dbReference>
<dbReference type="Gene3D" id="3.40.50.2020">
    <property type="match status" value="1"/>
</dbReference>
<dbReference type="InterPro" id="IPR000836">
    <property type="entry name" value="PRibTrfase_dom"/>
</dbReference>
<dbReference type="InterPro" id="IPR029057">
    <property type="entry name" value="PRTase-like"/>
</dbReference>
<dbReference type="PANTHER" id="PTHR43363">
    <property type="entry name" value="HYPOXANTHINE PHOSPHORIBOSYLTRANSFERASE"/>
    <property type="match status" value="1"/>
</dbReference>
<dbReference type="PANTHER" id="PTHR43363:SF4">
    <property type="entry name" value="XANTHINE PHOSPHORIBOSYLTRANSFERASE 1"/>
    <property type="match status" value="1"/>
</dbReference>
<dbReference type="Pfam" id="PF00156">
    <property type="entry name" value="Pribosyltran"/>
    <property type="match status" value="1"/>
</dbReference>
<dbReference type="SUPFAM" id="SSF53271">
    <property type="entry name" value="PRTase-like"/>
    <property type="match status" value="1"/>
</dbReference>
<organism>
    <name type="scientific">Saccharomyces cerevisiae (strain ATCC 204508 / S288c)</name>
    <name type="common">Baker's yeast</name>
    <dbReference type="NCBI Taxonomy" id="559292"/>
    <lineage>
        <taxon>Eukaryota</taxon>
        <taxon>Fungi</taxon>
        <taxon>Dikarya</taxon>
        <taxon>Ascomycota</taxon>
        <taxon>Saccharomycotina</taxon>
        <taxon>Saccharomycetes</taxon>
        <taxon>Saccharomycetales</taxon>
        <taxon>Saccharomycetaceae</taxon>
        <taxon>Saccharomyces</taxon>
    </lineage>
</organism>
<gene>
    <name type="primary">XPT1</name>
    <name type="ordered locus">YJR133W</name>
    <name type="ORF">J2118</name>
</gene>
<comment type="function">
    <text evidence="1">May act as a xanthine phosphoribosyltransferase involved in the synthesis of purine nucleotides. Such activity is however unclear in vivo.</text>
</comment>
<comment type="subcellular location">
    <subcellularLocation>
        <location evidence="2">Cytoplasm</location>
    </subcellularLocation>
</comment>
<comment type="miscellaneous">
    <text evidence="3">Present with 721 molecules/cell in log phase SD medium.</text>
</comment>
<proteinExistence type="evidence at protein level"/>
<name>XPT1_YEAST</name>